<comment type="function">
    <text evidence="1">Catalyzes the rearrangement of 1-deoxy-D-xylulose 5-phosphate (DXP) to produce the thiazole phosphate moiety of thiamine. Sulfur is provided by the thiocarboxylate moiety of the carrier protein ThiS. In vitro, sulfur can be provided by H(2)S.</text>
</comment>
<comment type="catalytic activity">
    <reaction evidence="1">
        <text>[ThiS sulfur-carrier protein]-C-terminal-Gly-aminoethanethioate + 2-iminoacetate + 1-deoxy-D-xylulose 5-phosphate = [ThiS sulfur-carrier protein]-C-terminal Gly-Gly + 2-[(2R,5Z)-2-carboxy-4-methylthiazol-5(2H)-ylidene]ethyl phosphate + 2 H2O + H(+)</text>
        <dbReference type="Rhea" id="RHEA:26297"/>
        <dbReference type="Rhea" id="RHEA-COMP:12909"/>
        <dbReference type="Rhea" id="RHEA-COMP:19908"/>
        <dbReference type="ChEBI" id="CHEBI:15377"/>
        <dbReference type="ChEBI" id="CHEBI:15378"/>
        <dbReference type="ChEBI" id="CHEBI:57792"/>
        <dbReference type="ChEBI" id="CHEBI:62899"/>
        <dbReference type="ChEBI" id="CHEBI:77846"/>
        <dbReference type="ChEBI" id="CHEBI:90778"/>
        <dbReference type="ChEBI" id="CHEBI:232372"/>
        <dbReference type="EC" id="2.8.1.10"/>
    </reaction>
</comment>
<comment type="pathway">
    <text evidence="1">Cofactor biosynthesis; thiamine diphosphate biosynthesis.</text>
</comment>
<comment type="subunit">
    <text evidence="1">Homotetramer. Forms heterodimers with either ThiH or ThiS.</text>
</comment>
<comment type="subcellular location">
    <subcellularLocation>
        <location evidence="1">Cytoplasm</location>
    </subcellularLocation>
</comment>
<comment type="similarity">
    <text evidence="1">Belongs to the ThiG family.</text>
</comment>
<dbReference type="EC" id="2.8.1.10" evidence="1"/>
<dbReference type="EMBL" id="AP009240">
    <property type="protein sequence ID" value="BAG79802.1"/>
    <property type="molecule type" value="Genomic_DNA"/>
</dbReference>
<dbReference type="RefSeq" id="WP_000944103.1">
    <property type="nucleotide sequence ID" value="NC_011415.1"/>
</dbReference>
<dbReference type="SMR" id="B6I5K1"/>
<dbReference type="GeneID" id="75205508"/>
<dbReference type="KEGG" id="ecy:ECSE_4278"/>
<dbReference type="HOGENOM" id="CLU_062233_1_0_6"/>
<dbReference type="UniPathway" id="UPA00060"/>
<dbReference type="Proteomes" id="UP000008199">
    <property type="component" value="Chromosome"/>
</dbReference>
<dbReference type="GO" id="GO:0005737">
    <property type="term" value="C:cytoplasm"/>
    <property type="evidence" value="ECO:0007669"/>
    <property type="project" value="UniProtKB-SubCell"/>
</dbReference>
<dbReference type="GO" id="GO:1990107">
    <property type="term" value="F:thiazole synthase activity"/>
    <property type="evidence" value="ECO:0007669"/>
    <property type="project" value="UniProtKB-EC"/>
</dbReference>
<dbReference type="GO" id="GO:0009229">
    <property type="term" value="P:thiamine diphosphate biosynthetic process"/>
    <property type="evidence" value="ECO:0007669"/>
    <property type="project" value="UniProtKB-UniRule"/>
</dbReference>
<dbReference type="CDD" id="cd04728">
    <property type="entry name" value="ThiG"/>
    <property type="match status" value="1"/>
</dbReference>
<dbReference type="FunFam" id="3.20.20.70:FF:000049">
    <property type="entry name" value="Thiazole synthase"/>
    <property type="match status" value="1"/>
</dbReference>
<dbReference type="Gene3D" id="3.20.20.70">
    <property type="entry name" value="Aldolase class I"/>
    <property type="match status" value="1"/>
</dbReference>
<dbReference type="HAMAP" id="MF_00443">
    <property type="entry name" value="ThiG"/>
    <property type="match status" value="1"/>
</dbReference>
<dbReference type="InterPro" id="IPR013785">
    <property type="entry name" value="Aldolase_TIM"/>
</dbReference>
<dbReference type="InterPro" id="IPR033983">
    <property type="entry name" value="Thiazole_synthase_ThiG"/>
</dbReference>
<dbReference type="InterPro" id="IPR008867">
    <property type="entry name" value="ThiG"/>
</dbReference>
<dbReference type="PANTHER" id="PTHR34266">
    <property type="entry name" value="THIAZOLE SYNTHASE"/>
    <property type="match status" value="1"/>
</dbReference>
<dbReference type="PANTHER" id="PTHR34266:SF2">
    <property type="entry name" value="THIAZOLE SYNTHASE"/>
    <property type="match status" value="1"/>
</dbReference>
<dbReference type="Pfam" id="PF05690">
    <property type="entry name" value="ThiG"/>
    <property type="match status" value="1"/>
</dbReference>
<dbReference type="SUPFAM" id="SSF110399">
    <property type="entry name" value="ThiG-like"/>
    <property type="match status" value="1"/>
</dbReference>
<keyword id="KW-0963">Cytoplasm</keyword>
<keyword id="KW-0704">Schiff base</keyword>
<keyword id="KW-0784">Thiamine biosynthesis</keyword>
<keyword id="KW-0808">Transferase</keyword>
<proteinExistence type="inferred from homology"/>
<evidence type="ECO:0000255" key="1">
    <source>
        <dbReference type="HAMAP-Rule" id="MF_00443"/>
    </source>
</evidence>
<sequence length="256" mass="26870">MLRIADKTFDSHLFTGTGKFASSQLMVEAIRASGSQLVTLAMKRVDLRQHNDAILEPLIAAGVTLLPNTSGAKTAEEAIFAAHLAREALGTNWLKLEIHPDARWLLPDPIETLKAAETLVQQGFVVLPYCGADPVLCKRLEEVGCAAVMPLGAPIGSNQGLETRAMLEIIIQQATVPVVVDAGIGVPSHAAQALEMGADAVLVNTAIAVADDPVNMAKAFRLAVEAGLLARQSGPGSRSHFAHATSPLTGFLEASA</sequence>
<gene>
    <name evidence="1" type="primary">thiG</name>
    <name type="ordered locus">ECSE_4278</name>
</gene>
<reference key="1">
    <citation type="journal article" date="2008" name="DNA Res.">
        <title>Complete genome sequence and comparative analysis of the wild-type commensal Escherichia coli strain SE11 isolated from a healthy adult.</title>
        <authorList>
            <person name="Oshima K."/>
            <person name="Toh H."/>
            <person name="Ogura Y."/>
            <person name="Sasamoto H."/>
            <person name="Morita H."/>
            <person name="Park S.-H."/>
            <person name="Ooka T."/>
            <person name="Iyoda S."/>
            <person name="Taylor T.D."/>
            <person name="Hayashi T."/>
            <person name="Itoh K."/>
            <person name="Hattori M."/>
        </authorList>
    </citation>
    <scope>NUCLEOTIDE SEQUENCE [LARGE SCALE GENOMIC DNA]</scope>
    <source>
        <strain>SE11</strain>
    </source>
</reference>
<name>THIG_ECOSE</name>
<accession>B6I5K1</accession>
<protein>
    <recommendedName>
        <fullName evidence="1">Thiazole synthase</fullName>
        <ecNumber evidence="1">2.8.1.10</ecNumber>
    </recommendedName>
</protein>
<feature type="chain" id="PRO_1000196856" description="Thiazole synthase">
    <location>
        <begin position="1"/>
        <end position="256"/>
    </location>
</feature>
<feature type="active site" description="Schiff-base intermediate with DXP" evidence="1">
    <location>
        <position position="95"/>
    </location>
</feature>
<feature type="binding site" evidence="1">
    <location>
        <position position="156"/>
    </location>
    <ligand>
        <name>1-deoxy-D-xylulose 5-phosphate</name>
        <dbReference type="ChEBI" id="CHEBI:57792"/>
    </ligand>
</feature>
<feature type="binding site" evidence="1">
    <location>
        <begin position="182"/>
        <end position="183"/>
    </location>
    <ligand>
        <name>1-deoxy-D-xylulose 5-phosphate</name>
        <dbReference type="ChEBI" id="CHEBI:57792"/>
    </ligand>
</feature>
<feature type="binding site" evidence="1">
    <location>
        <begin position="204"/>
        <end position="205"/>
    </location>
    <ligand>
        <name>1-deoxy-D-xylulose 5-phosphate</name>
        <dbReference type="ChEBI" id="CHEBI:57792"/>
    </ligand>
</feature>
<organism>
    <name type="scientific">Escherichia coli (strain SE11)</name>
    <dbReference type="NCBI Taxonomy" id="409438"/>
    <lineage>
        <taxon>Bacteria</taxon>
        <taxon>Pseudomonadati</taxon>
        <taxon>Pseudomonadota</taxon>
        <taxon>Gammaproteobacteria</taxon>
        <taxon>Enterobacterales</taxon>
        <taxon>Enterobacteriaceae</taxon>
        <taxon>Escherichia</taxon>
    </lineage>
</organism>